<dbReference type="EC" id="2.2.1.7" evidence="1"/>
<dbReference type="EMBL" id="CP000116">
    <property type="protein sequence ID" value="AAZ96832.1"/>
    <property type="molecule type" value="Genomic_DNA"/>
</dbReference>
<dbReference type="RefSeq" id="WP_011311391.1">
    <property type="nucleotide sequence ID" value="NC_007404.1"/>
</dbReference>
<dbReference type="SMR" id="Q3SKF1"/>
<dbReference type="STRING" id="292415.Tbd_0879"/>
<dbReference type="KEGG" id="tbd:Tbd_0879"/>
<dbReference type="eggNOG" id="COG1154">
    <property type="taxonomic scope" value="Bacteria"/>
</dbReference>
<dbReference type="HOGENOM" id="CLU_009227_1_4_4"/>
<dbReference type="OrthoDB" id="9803371at2"/>
<dbReference type="UniPathway" id="UPA00064">
    <property type="reaction ID" value="UER00091"/>
</dbReference>
<dbReference type="Proteomes" id="UP000008291">
    <property type="component" value="Chromosome"/>
</dbReference>
<dbReference type="GO" id="GO:0005829">
    <property type="term" value="C:cytosol"/>
    <property type="evidence" value="ECO:0007669"/>
    <property type="project" value="TreeGrafter"/>
</dbReference>
<dbReference type="GO" id="GO:0008661">
    <property type="term" value="F:1-deoxy-D-xylulose-5-phosphate synthase activity"/>
    <property type="evidence" value="ECO:0007669"/>
    <property type="project" value="UniProtKB-UniRule"/>
</dbReference>
<dbReference type="GO" id="GO:0000287">
    <property type="term" value="F:magnesium ion binding"/>
    <property type="evidence" value="ECO:0007669"/>
    <property type="project" value="UniProtKB-UniRule"/>
</dbReference>
<dbReference type="GO" id="GO:0030976">
    <property type="term" value="F:thiamine pyrophosphate binding"/>
    <property type="evidence" value="ECO:0007669"/>
    <property type="project" value="UniProtKB-UniRule"/>
</dbReference>
<dbReference type="GO" id="GO:0052865">
    <property type="term" value="P:1-deoxy-D-xylulose 5-phosphate biosynthetic process"/>
    <property type="evidence" value="ECO:0007669"/>
    <property type="project" value="UniProtKB-UniPathway"/>
</dbReference>
<dbReference type="GO" id="GO:0019288">
    <property type="term" value="P:isopentenyl diphosphate biosynthetic process, methylerythritol 4-phosphate pathway"/>
    <property type="evidence" value="ECO:0007669"/>
    <property type="project" value="TreeGrafter"/>
</dbReference>
<dbReference type="GO" id="GO:0016114">
    <property type="term" value="P:terpenoid biosynthetic process"/>
    <property type="evidence" value="ECO:0007669"/>
    <property type="project" value="UniProtKB-UniRule"/>
</dbReference>
<dbReference type="GO" id="GO:0009228">
    <property type="term" value="P:thiamine biosynthetic process"/>
    <property type="evidence" value="ECO:0007669"/>
    <property type="project" value="UniProtKB-UniRule"/>
</dbReference>
<dbReference type="CDD" id="cd02007">
    <property type="entry name" value="TPP_DXS"/>
    <property type="match status" value="1"/>
</dbReference>
<dbReference type="CDD" id="cd07033">
    <property type="entry name" value="TPP_PYR_DXS_TK_like"/>
    <property type="match status" value="1"/>
</dbReference>
<dbReference type="FunFam" id="3.40.50.920:FF:000002">
    <property type="entry name" value="1-deoxy-D-xylulose-5-phosphate synthase"/>
    <property type="match status" value="1"/>
</dbReference>
<dbReference type="FunFam" id="3.40.50.970:FF:000005">
    <property type="entry name" value="1-deoxy-D-xylulose-5-phosphate synthase"/>
    <property type="match status" value="1"/>
</dbReference>
<dbReference type="Gene3D" id="3.40.50.920">
    <property type="match status" value="1"/>
</dbReference>
<dbReference type="Gene3D" id="3.40.50.970">
    <property type="match status" value="2"/>
</dbReference>
<dbReference type="HAMAP" id="MF_00315">
    <property type="entry name" value="DXP_synth"/>
    <property type="match status" value="1"/>
</dbReference>
<dbReference type="InterPro" id="IPR005477">
    <property type="entry name" value="Dxylulose-5-P_synthase"/>
</dbReference>
<dbReference type="InterPro" id="IPR029061">
    <property type="entry name" value="THDP-binding"/>
</dbReference>
<dbReference type="InterPro" id="IPR009014">
    <property type="entry name" value="Transketo_C/PFOR_II"/>
</dbReference>
<dbReference type="InterPro" id="IPR005475">
    <property type="entry name" value="Transketolase-like_Pyr-bd"/>
</dbReference>
<dbReference type="InterPro" id="IPR020826">
    <property type="entry name" value="Transketolase_BS"/>
</dbReference>
<dbReference type="InterPro" id="IPR033248">
    <property type="entry name" value="Transketolase_C"/>
</dbReference>
<dbReference type="InterPro" id="IPR049557">
    <property type="entry name" value="Transketolase_CS"/>
</dbReference>
<dbReference type="NCBIfam" id="TIGR00204">
    <property type="entry name" value="dxs"/>
    <property type="match status" value="1"/>
</dbReference>
<dbReference type="NCBIfam" id="NF003933">
    <property type="entry name" value="PRK05444.2-2"/>
    <property type="match status" value="1"/>
</dbReference>
<dbReference type="PANTHER" id="PTHR43322">
    <property type="entry name" value="1-D-DEOXYXYLULOSE 5-PHOSPHATE SYNTHASE-RELATED"/>
    <property type="match status" value="1"/>
</dbReference>
<dbReference type="PANTHER" id="PTHR43322:SF5">
    <property type="entry name" value="1-DEOXY-D-XYLULOSE-5-PHOSPHATE SYNTHASE, CHLOROPLASTIC"/>
    <property type="match status" value="1"/>
</dbReference>
<dbReference type="Pfam" id="PF13292">
    <property type="entry name" value="DXP_synthase_N"/>
    <property type="match status" value="1"/>
</dbReference>
<dbReference type="Pfam" id="PF02779">
    <property type="entry name" value="Transket_pyr"/>
    <property type="match status" value="1"/>
</dbReference>
<dbReference type="Pfam" id="PF02780">
    <property type="entry name" value="Transketolase_C"/>
    <property type="match status" value="1"/>
</dbReference>
<dbReference type="SMART" id="SM00861">
    <property type="entry name" value="Transket_pyr"/>
    <property type="match status" value="1"/>
</dbReference>
<dbReference type="SUPFAM" id="SSF52518">
    <property type="entry name" value="Thiamin diphosphate-binding fold (THDP-binding)"/>
    <property type="match status" value="2"/>
</dbReference>
<dbReference type="SUPFAM" id="SSF52922">
    <property type="entry name" value="TK C-terminal domain-like"/>
    <property type="match status" value="1"/>
</dbReference>
<dbReference type="PROSITE" id="PS00801">
    <property type="entry name" value="TRANSKETOLASE_1"/>
    <property type="match status" value="1"/>
</dbReference>
<dbReference type="PROSITE" id="PS00802">
    <property type="entry name" value="TRANSKETOLASE_2"/>
    <property type="match status" value="1"/>
</dbReference>
<name>DXS_THIDA</name>
<sequence>MPASLLDTIESPADLRALPAAELPGLAAEVRAFLIDSVAGTGGHLASNLGAVELTLALHYVFDTPRDRIVWDVGHQSYTHKILTGRRDAMQGLRQRGGIAGFPRRAESEFDAFGTGHSSTSISAALGMAEAFHQLGSDQRAVAVIGDGAMTAGMAFEALNNAGATELPLLVVLNDNDMSISPNVGALNNYLARLMSGRFYAAARRAGDKVLSVAPPIRELAKRAEEHMKGMVTPGTLFEEFGFNYIGPIDGHDLDVLVNTLRNIRHLRGPQFLHVVTRKGKGYTPAETNPCLYHGVARFDPAAGVAEKRAGKPSYTEVFGDWLCDMAASDPRLVGITPAMREGSGLVRFSQEFPERYFDVGIAEQHALTFAAGLACEGVKPVVAIYSTFLQRAYDQLIHDIALQNLPVTLAIDRAGLVGADGPTHAGSFDLSFLRCVPDLVIAAPSDENECRRLLSTAFLHDGPAAVRYPRGCGTGAAIEPGLEPVEIGKGVCRRRGRDVALLAFGSLVAPALTAAERLDATVADMRFVKPLDVDLVGELAAGHRLLVTLEENAVAGGAGAAVAELLAQLGIVVPVLQLGLSDVFIEHGDAAAMLAACGLDAPGIERAVSERLAALPE</sequence>
<keyword id="KW-0414">Isoprene biosynthesis</keyword>
<keyword id="KW-0460">Magnesium</keyword>
<keyword id="KW-0479">Metal-binding</keyword>
<keyword id="KW-1185">Reference proteome</keyword>
<keyword id="KW-0784">Thiamine biosynthesis</keyword>
<keyword id="KW-0786">Thiamine pyrophosphate</keyword>
<keyword id="KW-0808">Transferase</keyword>
<protein>
    <recommendedName>
        <fullName evidence="1">1-deoxy-D-xylulose-5-phosphate synthase</fullName>
        <ecNumber evidence="1">2.2.1.7</ecNumber>
    </recommendedName>
    <alternativeName>
        <fullName evidence="1">1-deoxyxylulose-5-phosphate synthase</fullName>
        <shortName evidence="1">DXP synthase</shortName>
        <shortName evidence="1">DXPS</shortName>
    </alternativeName>
</protein>
<evidence type="ECO:0000255" key="1">
    <source>
        <dbReference type="HAMAP-Rule" id="MF_00315"/>
    </source>
</evidence>
<accession>Q3SKF1</accession>
<organism>
    <name type="scientific">Thiobacillus denitrificans (strain ATCC 25259 / T1)</name>
    <dbReference type="NCBI Taxonomy" id="292415"/>
    <lineage>
        <taxon>Bacteria</taxon>
        <taxon>Pseudomonadati</taxon>
        <taxon>Pseudomonadota</taxon>
        <taxon>Betaproteobacteria</taxon>
        <taxon>Nitrosomonadales</taxon>
        <taxon>Thiobacillaceae</taxon>
        <taxon>Thiobacillus</taxon>
    </lineage>
</organism>
<feature type="chain" id="PRO_0000256499" description="1-deoxy-D-xylulose-5-phosphate synthase">
    <location>
        <begin position="1"/>
        <end position="618"/>
    </location>
</feature>
<feature type="binding site" evidence="1">
    <location>
        <position position="75"/>
    </location>
    <ligand>
        <name>thiamine diphosphate</name>
        <dbReference type="ChEBI" id="CHEBI:58937"/>
    </ligand>
</feature>
<feature type="binding site" evidence="1">
    <location>
        <begin position="116"/>
        <end position="118"/>
    </location>
    <ligand>
        <name>thiamine diphosphate</name>
        <dbReference type="ChEBI" id="CHEBI:58937"/>
    </ligand>
</feature>
<feature type="binding site" evidence="1">
    <location>
        <position position="147"/>
    </location>
    <ligand>
        <name>Mg(2+)</name>
        <dbReference type="ChEBI" id="CHEBI:18420"/>
    </ligand>
</feature>
<feature type="binding site" evidence="1">
    <location>
        <begin position="148"/>
        <end position="149"/>
    </location>
    <ligand>
        <name>thiamine diphosphate</name>
        <dbReference type="ChEBI" id="CHEBI:58937"/>
    </ligand>
</feature>
<feature type="binding site" evidence="1">
    <location>
        <position position="176"/>
    </location>
    <ligand>
        <name>Mg(2+)</name>
        <dbReference type="ChEBI" id="CHEBI:18420"/>
    </ligand>
</feature>
<feature type="binding site" evidence="1">
    <location>
        <position position="176"/>
    </location>
    <ligand>
        <name>thiamine diphosphate</name>
        <dbReference type="ChEBI" id="CHEBI:58937"/>
    </ligand>
</feature>
<feature type="binding site" evidence="1">
    <location>
        <position position="283"/>
    </location>
    <ligand>
        <name>thiamine diphosphate</name>
        <dbReference type="ChEBI" id="CHEBI:58937"/>
    </ligand>
</feature>
<feature type="binding site" evidence="1">
    <location>
        <position position="364"/>
    </location>
    <ligand>
        <name>thiamine diphosphate</name>
        <dbReference type="ChEBI" id="CHEBI:58937"/>
    </ligand>
</feature>
<reference key="1">
    <citation type="journal article" date="2006" name="J. Bacteriol.">
        <title>The genome sequence of the obligately chemolithoautotrophic, facultatively anaerobic bacterium Thiobacillus denitrificans.</title>
        <authorList>
            <person name="Beller H.R."/>
            <person name="Chain P.S."/>
            <person name="Letain T.E."/>
            <person name="Chakicherla A."/>
            <person name="Larimer F.W."/>
            <person name="Richardson P.M."/>
            <person name="Coleman M.A."/>
            <person name="Wood A.P."/>
            <person name="Kelly D.P."/>
        </authorList>
    </citation>
    <scope>NUCLEOTIDE SEQUENCE [LARGE SCALE GENOMIC DNA]</scope>
    <source>
        <strain>ATCC 25259 / T1</strain>
    </source>
</reference>
<proteinExistence type="inferred from homology"/>
<gene>
    <name evidence="1" type="primary">dxs</name>
    <name type="ordered locus">Tbd_0879</name>
</gene>
<comment type="function">
    <text evidence="1">Catalyzes the acyloin condensation reaction between C atoms 2 and 3 of pyruvate and glyceraldehyde 3-phosphate to yield 1-deoxy-D-xylulose-5-phosphate (DXP).</text>
</comment>
<comment type="catalytic activity">
    <reaction evidence="1">
        <text>D-glyceraldehyde 3-phosphate + pyruvate + H(+) = 1-deoxy-D-xylulose 5-phosphate + CO2</text>
        <dbReference type="Rhea" id="RHEA:12605"/>
        <dbReference type="ChEBI" id="CHEBI:15361"/>
        <dbReference type="ChEBI" id="CHEBI:15378"/>
        <dbReference type="ChEBI" id="CHEBI:16526"/>
        <dbReference type="ChEBI" id="CHEBI:57792"/>
        <dbReference type="ChEBI" id="CHEBI:59776"/>
        <dbReference type="EC" id="2.2.1.7"/>
    </reaction>
</comment>
<comment type="cofactor">
    <cofactor evidence="1">
        <name>Mg(2+)</name>
        <dbReference type="ChEBI" id="CHEBI:18420"/>
    </cofactor>
    <text evidence="1">Binds 1 Mg(2+) ion per subunit.</text>
</comment>
<comment type="cofactor">
    <cofactor evidence="1">
        <name>thiamine diphosphate</name>
        <dbReference type="ChEBI" id="CHEBI:58937"/>
    </cofactor>
    <text evidence="1">Binds 1 thiamine pyrophosphate per subunit.</text>
</comment>
<comment type="pathway">
    <text evidence="1">Metabolic intermediate biosynthesis; 1-deoxy-D-xylulose 5-phosphate biosynthesis; 1-deoxy-D-xylulose 5-phosphate from D-glyceraldehyde 3-phosphate and pyruvate: step 1/1.</text>
</comment>
<comment type="subunit">
    <text evidence="1">Homodimer.</text>
</comment>
<comment type="similarity">
    <text evidence="1">Belongs to the transketolase family. DXPS subfamily.</text>
</comment>